<keyword id="KW-0175">Coiled coil</keyword>
<keyword id="KW-0539">Nucleus</keyword>
<keyword id="KW-1185">Reference proteome</keyword>
<keyword id="KW-0804">Transcription</keyword>
<keyword id="KW-0805">Transcription regulation</keyword>
<dbReference type="EMBL" id="BC056843">
    <property type="protein sequence ID" value="AAH56843.1"/>
    <property type="molecule type" value="mRNA"/>
</dbReference>
<dbReference type="RefSeq" id="NP_001079912.1">
    <property type="nucleotide sequence ID" value="NM_001086443.1"/>
</dbReference>
<dbReference type="RefSeq" id="XP_018111949.1">
    <property type="nucleotide sequence ID" value="XM_018256460.1"/>
</dbReference>
<dbReference type="RefSeq" id="XP_018111950.1">
    <property type="nucleotide sequence ID" value="XM_018256461.1"/>
</dbReference>
<dbReference type="SMR" id="Q6PGT0"/>
<dbReference type="DNASU" id="379602"/>
<dbReference type="GeneID" id="379602"/>
<dbReference type="KEGG" id="xla:379602"/>
<dbReference type="AGR" id="Xenbase:XB-GENE-6255203"/>
<dbReference type="CTD" id="379602"/>
<dbReference type="Xenbase" id="XB-GENE-6255203">
    <property type="gene designation" value="tada3.L"/>
</dbReference>
<dbReference type="OMA" id="KMGHFGG"/>
<dbReference type="OrthoDB" id="1232at2759"/>
<dbReference type="Proteomes" id="UP000186698">
    <property type="component" value="Chromosome 4L"/>
</dbReference>
<dbReference type="Bgee" id="379602">
    <property type="expression patterns" value="Expressed in oocyte and 19 other cell types or tissues"/>
</dbReference>
<dbReference type="GO" id="GO:0005634">
    <property type="term" value="C:nucleus"/>
    <property type="evidence" value="ECO:0007669"/>
    <property type="project" value="UniProtKB-SubCell"/>
</dbReference>
<dbReference type="GO" id="GO:0000124">
    <property type="term" value="C:SAGA complex"/>
    <property type="evidence" value="ECO:0000318"/>
    <property type="project" value="GO_Central"/>
</dbReference>
<dbReference type="GO" id="GO:0003713">
    <property type="term" value="F:transcription coactivator activity"/>
    <property type="evidence" value="ECO:0000318"/>
    <property type="project" value="GO_Central"/>
</dbReference>
<dbReference type="GO" id="GO:0006357">
    <property type="term" value="P:regulation of transcription by RNA polymerase II"/>
    <property type="evidence" value="ECO:0000318"/>
    <property type="project" value="GO_Central"/>
</dbReference>
<dbReference type="InterPro" id="IPR019340">
    <property type="entry name" value="Histone_AcTrfase_su3"/>
</dbReference>
<dbReference type="PANTHER" id="PTHR13556:SF2">
    <property type="entry name" value="TRANSCRIPTIONAL ADAPTER 3"/>
    <property type="match status" value="1"/>
</dbReference>
<dbReference type="PANTHER" id="PTHR13556">
    <property type="entry name" value="TRANSCRIPTIONAL ADAPTER 3-RELATED"/>
    <property type="match status" value="1"/>
</dbReference>
<dbReference type="Pfam" id="PF10198">
    <property type="entry name" value="Ada3"/>
    <property type="match status" value="1"/>
</dbReference>
<proteinExistence type="evidence at transcript level"/>
<organism>
    <name type="scientific">Xenopus laevis</name>
    <name type="common">African clawed frog</name>
    <dbReference type="NCBI Taxonomy" id="8355"/>
    <lineage>
        <taxon>Eukaryota</taxon>
        <taxon>Metazoa</taxon>
        <taxon>Chordata</taxon>
        <taxon>Craniata</taxon>
        <taxon>Vertebrata</taxon>
        <taxon>Euteleostomi</taxon>
        <taxon>Amphibia</taxon>
        <taxon>Batrachia</taxon>
        <taxon>Anura</taxon>
        <taxon>Pipoidea</taxon>
        <taxon>Pipidae</taxon>
        <taxon>Xenopodinae</taxon>
        <taxon>Xenopus</taxon>
        <taxon>Xenopus</taxon>
    </lineage>
</organism>
<comment type="function">
    <text evidence="1">Functions as a component of the PCAF complex. The PCAF complex is capable of efficiently acetylating histones in a nucleosomal context (By similarity).</text>
</comment>
<comment type="subcellular location">
    <subcellularLocation>
        <location evidence="1">Nucleus</location>
    </subcellularLocation>
</comment>
<comment type="similarity">
    <text evidence="4">Belongs to the NGG1 family.</text>
</comment>
<sequence length="432" mass="49059">MSELKDCPLQFHDFKSVDHIKLCPRYTAVLSRSEDDGIGIEELDTLQLELETLLSSASRRLRVLEAETQILTDWQDKKGDRRFLKLGKEHELGTPIKHSKPKKQKLDGKVSHASGPGPGRPKSRNMQQKMQEYEFTDDPVDVPRIPKNDAPNRFWASVEPYCADITNDEIKVLEDLLKTPEDEADYYKIPPLGKHYSQRWAQEDLLEEQKDGARAALSGDKKKGILGPLAELDSKDVDSLLKKSDSQHDQPEDGCPFGHLTQRLLQALVEENIISPVEDSPIPEISGKESGTDGASTSPRSQNKPFSAPHTKSLEVRVKEELIAQGLLESDDRPADDSEDEVLAELRKRQAELKALSAHNRAKKQELLRLAKEEMNRQELRQRVRMADNEVMDAFRKIMAARQKKRTPTKKEKDQAWKALKERESILKLLDG</sequence>
<accession>Q6PGT0</accession>
<evidence type="ECO:0000250" key="1"/>
<evidence type="ECO:0000255" key="2"/>
<evidence type="ECO:0000256" key="3">
    <source>
        <dbReference type="SAM" id="MobiDB-lite"/>
    </source>
</evidence>
<evidence type="ECO:0000305" key="4"/>
<gene>
    <name type="primary">tada3-a</name>
    <name type="synonym">ada3-a</name>
    <name type="synonym">tada3l-a</name>
</gene>
<feature type="chain" id="PRO_0000356231" description="Transcriptional adapter 3-A">
    <location>
        <begin position="1"/>
        <end position="432"/>
    </location>
</feature>
<feature type="region of interest" description="Disordered" evidence="3">
    <location>
        <begin position="90"/>
        <end position="127"/>
    </location>
</feature>
<feature type="region of interest" description="Disordered" evidence="3">
    <location>
        <begin position="275"/>
        <end position="314"/>
    </location>
</feature>
<feature type="coiled-coil region" evidence="2">
    <location>
        <begin position="335"/>
        <end position="398"/>
    </location>
</feature>
<feature type="compositionally biased region" description="Polar residues" evidence="3">
    <location>
        <begin position="293"/>
        <end position="305"/>
    </location>
</feature>
<name>TAD3A_XENLA</name>
<reference key="1">
    <citation type="submission" date="2003-08" db="EMBL/GenBank/DDBJ databases">
        <authorList>
            <consortium name="NIH - Xenopus Gene Collection (XGC) project"/>
        </authorList>
    </citation>
    <scope>NUCLEOTIDE SEQUENCE [LARGE SCALE MRNA]</scope>
    <source>
        <tissue>Tadpole</tissue>
    </source>
</reference>
<protein>
    <recommendedName>
        <fullName>Transcriptional adapter 3-A</fullName>
    </recommendedName>
    <alternativeName>
        <fullName>ADA3 homolog A</fullName>
    </alternativeName>
    <alternativeName>
        <fullName>Transcriptional adapter 3-like A</fullName>
        <shortName>ADA3-like protein A</shortName>
    </alternativeName>
</protein>